<organism>
    <name type="scientific">Klebsiella pneumoniae subsp. pneumoniae (strain ATCC 700721 / MGH 78578)</name>
    <dbReference type="NCBI Taxonomy" id="272620"/>
    <lineage>
        <taxon>Bacteria</taxon>
        <taxon>Pseudomonadati</taxon>
        <taxon>Pseudomonadota</taxon>
        <taxon>Gammaproteobacteria</taxon>
        <taxon>Enterobacterales</taxon>
        <taxon>Enterobacteriaceae</taxon>
        <taxon>Klebsiella/Raoultella group</taxon>
        <taxon>Klebsiella</taxon>
        <taxon>Klebsiella pneumoniae complex</taxon>
    </lineage>
</organism>
<reference key="1">
    <citation type="submission" date="2006-09" db="EMBL/GenBank/DDBJ databases">
        <authorList>
            <consortium name="The Klebsiella pneumonia Genome Sequencing Project"/>
            <person name="McClelland M."/>
            <person name="Sanderson E.K."/>
            <person name="Spieth J."/>
            <person name="Clifton W.S."/>
            <person name="Latreille P."/>
            <person name="Sabo A."/>
            <person name="Pepin K."/>
            <person name="Bhonagiri V."/>
            <person name="Porwollik S."/>
            <person name="Ali J."/>
            <person name="Wilson R.K."/>
        </authorList>
    </citation>
    <scope>NUCLEOTIDE SEQUENCE [LARGE SCALE GENOMIC DNA]</scope>
    <source>
        <strain>ATCC 700721 / MGH 78578</strain>
    </source>
</reference>
<protein>
    <recommendedName>
        <fullName evidence="1">Maltoporin 1</fullName>
    </recommendedName>
    <alternativeName>
        <fullName evidence="1">Maltose-inducible porin 1</fullName>
    </alternativeName>
</protein>
<dbReference type="EMBL" id="CP000647">
    <property type="protein sequence ID" value="ABR75885.1"/>
    <property type="molecule type" value="Genomic_DNA"/>
</dbReference>
<dbReference type="RefSeq" id="WP_004177240.1">
    <property type="nucleotide sequence ID" value="NC_009648.1"/>
</dbReference>
<dbReference type="SMR" id="A6T5L4"/>
<dbReference type="STRING" id="272620.KPN_00433"/>
<dbReference type="PaxDb" id="272620-KPN_00433"/>
<dbReference type="EnsemblBacteria" id="ABR75885">
    <property type="protein sequence ID" value="ABR75885"/>
    <property type="gene ID" value="KPN_00433"/>
</dbReference>
<dbReference type="KEGG" id="kpn:KPN_00433"/>
<dbReference type="HOGENOM" id="CLU_032473_4_1_6"/>
<dbReference type="Proteomes" id="UP000000265">
    <property type="component" value="Chromosome"/>
</dbReference>
<dbReference type="GO" id="GO:0009279">
    <property type="term" value="C:cell outer membrane"/>
    <property type="evidence" value="ECO:0007669"/>
    <property type="project" value="UniProtKB-SubCell"/>
</dbReference>
<dbReference type="GO" id="GO:0046930">
    <property type="term" value="C:pore complex"/>
    <property type="evidence" value="ECO:0007669"/>
    <property type="project" value="UniProtKB-KW"/>
</dbReference>
<dbReference type="GO" id="GO:0042958">
    <property type="term" value="F:maltodextrin transmembrane transporter activity"/>
    <property type="evidence" value="ECO:0007669"/>
    <property type="project" value="InterPro"/>
</dbReference>
<dbReference type="GO" id="GO:0015481">
    <property type="term" value="F:maltose transporting porin activity"/>
    <property type="evidence" value="ECO:0007669"/>
    <property type="project" value="InterPro"/>
</dbReference>
<dbReference type="GO" id="GO:0006811">
    <property type="term" value="P:monoatomic ion transport"/>
    <property type="evidence" value="ECO:0007669"/>
    <property type="project" value="UniProtKB-KW"/>
</dbReference>
<dbReference type="CDD" id="cd01346">
    <property type="entry name" value="Maltoporin-like"/>
    <property type="match status" value="1"/>
</dbReference>
<dbReference type="Gene3D" id="2.40.170.10">
    <property type="entry name" value="Porin, LamB type"/>
    <property type="match status" value="1"/>
</dbReference>
<dbReference type="HAMAP" id="MF_01301">
    <property type="entry name" value="LamB"/>
    <property type="match status" value="1"/>
</dbReference>
<dbReference type="InterPro" id="IPR050286">
    <property type="entry name" value="G_neg_Bact_CarbUptk_Porin"/>
</dbReference>
<dbReference type="InterPro" id="IPR023738">
    <property type="entry name" value="Maltoporin"/>
</dbReference>
<dbReference type="InterPro" id="IPR003192">
    <property type="entry name" value="Porin_LamB"/>
</dbReference>
<dbReference type="InterPro" id="IPR036998">
    <property type="entry name" value="Porin_LamB_sf"/>
</dbReference>
<dbReference type="NCBIfam" id="NF006860">
    <property type="entry name" value="PRK09360.1"/>
    <property type="match status" value="1"/>
</dbReference>
<dbReference type="NCBIfam" id="NF009061">
    <property type="entry name" value="PRK12395.1"/>
    <property type="match status" value="1"/>
</dbReference>
<dbReference type="PANTHER" id="PTHR38762">
    <property type="entry name" value="CRYPTIC OUTER MEMBRANE PORIN BGLH-RELATED"/>
    <property type="match status" value="1"/>
</dbReference>
<dbReference type="PANTHER" id="PTHR38762:SF1">
    <property type="entry name" value="CRYPTIC OUTER MEMBRANE PORIN BGLH-RELATED"/>
    <property type="match status" value="1"/>
</dbReference>
<dbReference type="Pfam" id="PF02264">
    <property type="entry name" value="LamB"/>
    <property type="match status" value="1"/>
</dbReference>
<dbReference type="SUPFAM" id="SSF56935">
    <property type="entry name" value="Porins"/>
    <property type="match status" value="1"/>
</dbReference>
<sequence length="423" mass="46758">MNTTLRALSVALAAALIAPSAFAATAAIPTIDFHGYMRAGVGVSGDGSEAEWQKNKLGRLGNESDTYGELELGSEVYKKDDVSFYLDSMVSMVSDGSNDNETTLNDDAQFGLRQLNLQIKGLIPGDPNAVIWGGKRYYQRHDLHIIDTKYWNISGSGAGVENYTLGPGAVSLAWIRGDANDVDYRVDGDSNVNINYIDLRYAGWKPWAGSWTEFGIDYAMPNTTKKQDSYGGLYDADNGVMLTGEISQDMLGGYNKTVLQYANKGLAQNMVSQGGGWYDMWNYVNDATGYRVINTGLIPITEKFSINHVLTWGSADDITDYTDKTRMLSLVARGQYQFTDYVRLIGEVGGFYQKDSYNNGTSYKQAGEKYTIALGLADGPDFMSRPELRIFASYLNDSEDGKPFEDQTANNTWNFGVQVEAWW</sequence>
<name>LAMB1_KLEP7</name>
<accession>A6T5L4</accession>
<keyword id="KW-0998">Cell outer membrane</keyword>
<keyword id="KW-0406">Ion transport</keyword>
<keyword id="KW-0472">Membrane</keyword>
<keyword id="KW-0626">Porin</keyword>
<keyword id="KW-0732">Signal</keyword>
<keyword id="KW-0762">Sugar transport</keyword>
<keyword id="KW-0812">Transmembrane</keyword>
<keyword id="KW-1134">Transmembrane beta strand</keyword>
<keyword id="KW-0813">Transport</keyword>
<gene>
    <name evidence="1" type="primary">lamB1</name>
    <name type="ordered locus">KPN78578_04240</name>
    <name type="ORF">KPN_00433</name>
</gene>
<comment type="function">
    <text evidence="1">Involved in the transport of maltose and maltodextrins.</text>
</comment>
<comment type="catalytic activity">
    <reaction evidence="1">
        <text>beta-maltose(in) = beta-maltose(out)</text>
        <dbReference type="Rhea" id="RHEA:29731"/>
        <dbReference type="ChEBI" id="CHEBI:18147"/>
    </reaction>
</comment>
<comment type="subunit">
    <text evidence="1">Homotrimer formed of three 18-stranded antiparallel beta-barrels, containing three independent channels.</text>
</comment>
<comment type="subcellular location">
    <subcellularLocation>
        <location evidence="1">Cell outer membrane</location>
        <topology evidence="1">Multi-pass membrane protein</topology>
    </subcellularLocation>
</comment>
<comment type="induction">
    <text evidence="1">By maltose.</text>
</comment>
<comment type="similarity">
    <text evidence="1">Belongs to the porin LamB (TC 1.B.3) family.</text>
</comment>
<feature type="signal peptide" evidence="1">
    <location>
        <begin position="1"/>
        <end position="23"/>
    </location>
</feature>
<feature type="chain" id="PRO_0000322013" description="Maltoporin 1">
    <location>
        <begin position="24"/>
        <end position="423"/>
    </location>
</feature>
<feature type="site" description="Greasy slide, important in sugar transport" evidence="1">
    <location>
        <position position="36"/>
    </location>
</feature>
<feature type="site" description="Greasy slide, important in sugar transport" evidence="1">
    <location>
        <position position="67"/>
    </location>
</feature>
<feature type="site" description="Greasy slide, important in sugar transport" evidence="1">
    <location>
        <position position="254"/>
    </location>
</feature>
<feature type="site" description="Greasy slide, important in sugar transport" evidence="1">
    <location>
        <position position="422"/>
    </location>
</feature>
<evidence type="ECO:0000255" key="1">
    <source>
        <dbReference type="HAMAP-Rule" id="MF_01301"/>
    </source>
</evidence>
<proteinExistence type="inferred from homology"/>